<sequence length="318" mass="33820">MAKELKGPGFHFDVHTDLRADQKAEVLIEALPWLEEFAGQRIVIKYGGNAMIDDHLKACFAEDMVFLRQVGLHPVVVHGGGPQISQMLKALGIKSEFKGGLRVTTPEAMDVVRMVLTGKVSRELVGLINAHGPFAVGLSGEDGALFSAMQRKPVIDGKPTDIGLVGDVVSVDASAVEDLINAGRIPVVSSVAPNEDDATEVLNVNADSAAAALAAALGASKLVVLTDVDGLYADWPDRDSLIGRIGVENLRDMLPDLESGMRPKMEACVRAIDGGVPRAHIIDGRKPHSILNEIFTTDGIGTMVVPEDGIEMRSSYGN</sequence>
<name>ARGB_BIFAA</name>
<comment type="function">
    <text evidence="1">Catalyzes the ATP-dependent phosphorylation of N-acetyl-L-glutamate.</text>
</comment>
<comment type="catalytic activity">
    <reaction evidence="1">
        <text>N-acetyl-L-glutamate + ATP = N-acetyl-L-glutamyl 5-phosphate + ADP</text>
        <dbReference type="Rhea" id="RHEA:14629"/>
        <dbReference type="ChEBI" id="CHEBI:30616"/>
        <dbReference type="ChEBI" id="CHEBI:44337"/>
        <dbReference type="ChEBI" id="CHEBI:57936"/>
        <dbReference type="ChEBI" id="CHEBI:456216"/>
        <dbReference type="EC" id="2.7.2.8"/>
    </reaction>
</comment>
<comment type="pathway">
    <text evidence="1">Amino-acid biosynthesis; L-arginine biosynthesis; N(2)-acetyl-L-ornithine from L-glutamate: step 2/4.</text>
</comment>
<comment type="subcellular location">
    <subcellularLocation>
        <location evidence="1">Cytoplasm</location>
    </subcellularLocation>
</comment>
<comment type="similarity">
    <text evidence="1">Belongs to the acetylglutamate kinase family. ArgB subfamily.</text>
</comment>
<organism>
    <name type="scientific">Bifidobacterium adolescentis (strain ATCC 15703 / DSM 20083 / NCTC 11814 / E194a)</name>
    <dbReference type="NCBI Taxonomy" id="367928"/>
    <lineage>
        <taxon>Bacteria</taxon>
        <taxon>Bacillati</taxon>
        <taxon>Actinomycetota</taxon>
        <taxon>Actinomycetes</taxon>
        <taxon>Bifidobacteriales</taxon>
        <taxon>Bifidobacteriaceae</taxon>
        <taxon>Bifidobacterium</taxon>
    </lineage>
</organism>
<keyword id="KW-0028">Amino-acid biosynthesis</keyword>
<keyword id="KW-0055">Arginine biosynthesis</keyword>
<keyword id="KW-0067">ATP-binding</keyword>
<keyword id="KW-0963">Cytoplasm</keyword>
<keyword id="KW-0418">Kinase</keyword>
<keyword id="KW-0547">Nucleotide-binding</keyword>
<keyword id="KW-1185">Reference proteome</keyword>
<keyword id="KW-0808">Transferase</keyword>
<reference key="1">
    <citation type="submission" date="2006-12" db="EMBL/GenBank/DDBJ databases">
        <title>Bifidobacterium adolescentis complete genome sequence.</title>
        <authorList>
            <person name="Suzuki T."/>
            <person name="Tsuda Y."/>
            <person name="Kanou N."/>
            <person name="Inoue T."/>
            <person name="Kumazaki K."/>
            <person name="Nagano S."/>
            <person name="Hirai S."/>
            <person name="Tanaka K."/>
            <person name="Watanabe K."/>
        </authorList>
    </citation>
    <scope>NUCLEOTIDE SEQUENCE [LARGE SCALE GENOMIC DNA]</scope>
    <source>
        <strain>ATCC 15703 / DSM 20083 / NCTC 11814 / E194a</strain>
    </source>
</reference>
<protein>
    <recommendedName>
        <fullName evidence="1">Acetylglutamate kinase</fullName>
        <ecNumber evidence="1">2.7.2.8</ecNumber>
    </recommendedName>
    <alternativeName>
        <fullName evidence="1">N-acetyl-L-glutamate 5-phosphotransferase</fullName>
    </alternativeName>
    <alternativeName>
        <fullName evidence="1">NAG kinase</fullName>
        <shortName evidence="1">NAGK</shortName>
    </alternativeName>
</protein>
<feature type="chain" id="PRO_0000335610" description="Acetylglutamate kinase">
    <location>
        <begin position="1"/>
        <end position="318"/>
    </location>
</feature>
<feature type="binding site" evidence="1">
    <location>
        <begin position="80"/>
        <end position="81"/>
    </location>
    <ligand>
        <name>substrate</name>
    </ligand>
</feature>
<feature type="binding site" evidence="1">
    <location>
        <position position="102"/>
    </location>
    <ligand>
        <name>substrate</name>
    </ligand>
</feature>
<feature type="binding site" evidence="1">
    <location>
        <position position="203"/>
    </location>
    <ligand>
        <name>substrate</name>
    </ligand>
</feature>
<feature type="site" description="Transition state stabilizer" evidence="1">
    <location>
        <position position="45"/>
    </location>
</feature>
<feature type="site" description="Transition state stabilizer" evidence="1">
    <location>
        <position position="264"/>
    </location>
</feature>
<evidence type="ECO:0000255" key="1">
    <source>
        <dbReference type="HAMAP-Rule" id="MF_00082"/>
    </source>
</evidence>
<accession>A1A1X1</accession>
<gene>
    <name evidence="1" type="primary">argB</name>
    <name type="ordered locus">BAD_0923</name>
</gene>
<proteinExistence type="inferred from homology"/>
<dbReference type="EC" id="2.7.2.8" evidence="1"/>
<dbReference type="EMBL" id="AP009256">
    <property type="protein sequence ID" value="BAF39704.1"/>
    <property type="molecule type" value="Genomic_DNA"/>
</dbReference>
<dbReference type="RefSeq" id="WP_003810291.1">
    <property type="nucleotide sequence ID" value="NZ_CAXVNC010000005.1"/>
</dbReference>
<dbReference type="SMR" id="A1A1X1"/>
<dbReference type="STRING" id="367928.BAD_0923"/>
<dbReference type="PaxDb" id="1680-BADO_0988"/>
<dbReference type="GeneID" id="4557389"/>
<dbReference type="KEGG" id="bad:BAD_0923"/>
<dbReference type="HOGENOM" id="CLU_053680_0_1_11"/>
<dbReference type="UniPathway" id="UPA00068">
    <property type="reaction ID" value="UER00107"/>
</dbReference>
<dbReference type="Proteomes" id="UP000008702">
    <property type="component" value="Chromosome"/>
</dbReference>
<dbReference type="GO" id="GO:0005737">
    <property type="term" value="C:cytoplasm"/>
    <property type="evidence" value="ECO:0007669"/>
    <property type="project" value="UniProtKB-SubCell"/>
</dbReference>
<dbReference type="GO" id="GO:0003991">
    <property type="term" value="F:acetylglutamate kinase activity"/>
    <property type="evidence" value="ECO:0007669"/>
    <property type="project" value="UniProtKB-UniRule"/>
</dbReference>
<dbReference type="GO" id="GO:0005524">
    <property type="term" value="F:ATP binding"/>
    <property type="evidence" value="ECO:0007669"/>
    <property type="project" value="UniProtKB-UniRule"/>
</dbReference>
<dbReference type="GO" id="GO:0042450">
    <property type="term" value="P:arginine biosynthetic process via ornithine"/>
    <property type="evidence" value="ECO:0007669"/>
    <property type="project" value="UniProtKB-UniRule"/>
</dbReference>
<dbReference type="GO" id="GO:0006526">
    <property type="term" value="P:L-arginine biosynthetic process"/>
    <property type="evidence" value="ECO:0007669"/>
    <property type="project" value="UniProtKB-UniPathway"/>
</dbReference>
<dbReference type="CDD" id="cd04250">
    <property type="entry name" value="AAK_NAGK-C"/>
    <property type="match status" value="1"/>
</dbReference>
<dbReference type="FunFam" id="3.40.1160.10:FF:000004">
    <property type="entry name" value="Acetylglutamate kinase"/>
    <property type="match status" value="1"/>
</dbReference>
<dbReference type="Gene3D" id="3.40.1160.10">
    <property type="entry name" value="Acetylglutamate kinase-like"/>
    <property type="match status" value="1"/>
</dbReference>
<dbReference type="HAMAP" id="MF_00082">
    <property type="entry name" value="ArgB"/>
    <property type="match status" value="1"/>
</dbReference>
<dbReference type="InterPro" id="IPR036393">
    <property type="entry name" value="AceGlu_kinase-like_sf"/>
</dbReference>
<dbReference type="InterPro" id="IPR004662">
    <property type="entry name" value="AcgluKinase_fam"/>
</dbReference>
<dbReference type="InterPro" id="IPR037528">
    <property type="entry name" value="ArgB"/>
</dbReference>
<dbReference type="InterPro" id="IPR001048">
    <property type="entry name" value="Asp/Glu/Uridylate_kinase"/>
</dbReference>
<dbReference type="InterPro" id="IPR001057">
    <property type="entry name" value="Glu/AcGlu_kinase"/>
</dbReference>
<dbReference type="InterPro" id="IPR041727">
    <property type="entry name" value="NAGK-C"/>
</dbReference>
<dbReference type="NCBIfam" id="TIGR00761">
    <property type="entry name" value="argB"/>
    <property type="match status" value="1"/>
</dbReference>
<dbReference type="PANTHER" id="PTHR23342">
    <property type="entry name" value="N-ACETYLGLUTAMATE SYNTHASE"/>
    <property type="match status" value="1"/>
</dbReference>
<dbReference type="PANTHER" id="PTHR23342:SF0">
    <property type="entry name" value="N-ACETYLGLUTAMATE SYNTHASE, MITOCHONDRIAL"/>
    <property type="match status" value="1"/>
</dbReference>
<dbReference type="Pfam" id="PF00696">
    <property type="entry name" value="AA_kinase"/>
    <property type="match status" value="1"/>
</dbReference>
<dbReference type="PIRSF" id="PIRSF000728">
    <property type="entry name" value="NAGK"/>
    <property type="match status" value="1"/>
</dbReference>
<dbReference type="PRINTS" id="PR00474">
    <property type="entry name" value="GLU5KINASE"/>
</dbReference>
<dbReference type="SUPFAM" id="SSF53633">
    <property type="entry name" value="Carbamate kinase-like"/>
    <property type="match status" value="1"/>
</dbReference>